<dbReference type="EC" id="6.1.1.21" evidence="1"/>
<dbReference type="EMBL" id="BX571857">
    <property type="protein sequence ID" value="CAG43368.1"/>
    <property type="molecule type" value="Genomic_DNA"/>
</dbReference>
<dbReference type="RefSeq" id="WP_000590826.1">
    <property type="nucleotide sequence ID" value="NC_002953.3"/>
</dbReference>
<dbReference type="SMR" id="Q6G8T8"/>
<dbReference type="KEGG" id="sas:SAS1567"/>
<dbReference type="HOGENOM" id="CLU_025113_1_1_9"/>
<dbReference type="GO" id="GO:0005737">
    <property type="term" value="C:cytoplasm"/>
    <property type="evidence" value="ECO:0007669"/>
    <property type="project" value="UniProtKB-SubCell"/>
</dbReference>
<dbReference type="GO" id="GO:0005524">
    <property type="term" value="F:ATP binding"/>
    <property type="evidence" value="ECO:0007669"/>
    <property type="project" value="UniProtKB-UniRule"/>
</dbReference>
<dbReference type="GO" id="GO:0140096">
    <property type="term" value="F:catalytic activity, acting on a protein"/>
    <property type="evidence" value="ECO:0007669"/>
    <property type="project" value="UniProtKB-ARBA"/>
</dbReference>
<dbReference type="GO" id="GO:0004821">
    <property type="term" value="F:histidine-tRNA ligase activity"/>
    <property type="evidence" value="ECO:0007669"/>
    <property type="project" value="UniProtKB-UniRule"/>
</dbReference>
<dbReference type="GO" id="GO:0016740">
    <property type="term" value="F:transferase activity"/>
    <property type="evidence" value="ECO:0007669"/>
    <property type="project" value="UniProtKB-ARBA"/>
</dbReference>
<dbReference type="GO" id="GO:0006427">
    <property type="term" value="P:histidyl-tRNA aminoacylation"/>
    <property type="evidence" value="ECO:0007669"/>
    <property type="project" value="UniProtKB-UniRule"/>
</dbReference>
<dbReference type="CDD" id="cd00738">
    <property type="entry name" value="HGTP_anticodon"/>
    <property type="match status" value="1"/>
</dbReference>
<dbReference type="CDD" id="cd00773">
    <property type="entry name" value="HisRS-like_core"/>
    <property type="match status" value="1"/>
</dbReference>
<dbReference type="FunFam" id="3.30.930.10:FF:000005">
    <property type="entry name" value="Histidine--tRNA ligase"/>
    <property type="match status" value="1"/>
</dbReference>
<dbReference type="Gene3D" id="3.40.50.800">
    <property type="entry name" value="Anticodon-binding domain"/>
    <property type="match status" value="1"/>
</dbReference>
<dbReference type="Gene3D" id="3.30.930.10">
    <property type="entry name" value="Bira Bifunctional Protein, Domain 2"/>
    <property type="match status" value="1"/>
</dbReference>
<dbReference type="HAMAP" id="MF_00127">
    <property type="entry name" value="His_tRNA_synth"/>
    <property type="match status" value="1"/>
</dbReference>
<dbReference type="InterPro" id="IPR006195">
    <property type="entry name" value="aa-tRNA-synth_II"/>
</dbReference>
<dbReference type="InterPro" id="IPR045864">
    <property type="entry name" value="aa-tRNA-synth_II/BPL/LPL"/>
</dbReference>
<dbReference type="InterPro" id="IPR004154">
    <property type="entry name" value="Anticodon-bd"/>
</dbReference>
<dbReference type="InterPro" id="IPR036621">
    <property type="entry name" value="Anticodon-bd_dom_sf"/>
</dbReference>
<dbReference type="InterPro" id="IPR015807">
    <property type="entry name" value="His-tRNA-ligase"/>
</dbReference>
<dbReference type="InterPro" id="IPR041715">
    <property type="entry name" value="HisRS-like_core"/>
</dbReference>
<dbReference type="InterPro" id="IPR004516">
    <property type="entry name" value="HisRS/HisZ"/>
</dbReference>
<dbReference type="NCBIfam" id="TIGR00442">
    <property type="entry name" value="hisS"/>
    <property type="match status" value="1"/>
</dbReference>
<dbReference type="PANTHER" id="PTHR43707:SF1">
    <property type="entry name" value="HISTIDINE--TRNA LIGASE, MITOCHONDRIAL-RELATED"/>
    <property type="match status" value="1"/>
</dbReference>
<dbReference type="PANTHER" id="PTHR43707">
    <property type="entry name" value="HISTIDYL-TRNA SYNTHETASE"/>
    <property type="match status" value="1"/>
</dbReference>
<dbReference type="Pfam" id="PF03129">
    <property type="entry name" value="HGTP_anticodon"/>
    <property type="match status" value="1"/>
</dbReference>
<dbReference type="Pfam" id="PF13393">
    <property type="entry name" value="tRNA-synt_His"/>
    <property type="match status" value="1"/>
</dbReference>
<dbReference type="PIRSF" id="PIRSF001549">
    <property type="entry name" value="His-tRNA_synth"/>
    <property type="match status" value="1"/>
</dbReference>
<dbReference type="SUPFAM" id="SSF52954">
    <property type="entry name" value="Class II aaRS ABD-related"/>
    <property type="match status" value="1"/>
</dbReference>
<dbReference type="SUPFAM" id="SSF55681">
    <property type="entry name" value="Class II aaRS and biotin synthetases"/>
    <property type="match status" value="1"/>
</dbReference>
<dbReference type="PROSITE" id="PS50862">
    <property type="entry name" value="AA_TRNA_LIGASE_II"/>
    <property type="match status" value="1"/>
</dbReference>
<comment type="catalytic activity">
    <reaction evidence="1">
        <text>tRNA(His) + L-histidine + ATP = L-histidyl-tRNA(His) + AMP + diphosphate + H(+)</text>
        <dbReference type="Rhea" id="RHEA:17313"/>
        <dbReference type="Rhea" id="RHEA-COMP:9665"/>
        <dbReference type="Rhea" id="RHEA-COMP:9689"/>
        <dbReference type="ChEBI" id="CHEBI:15378"/>
        <dbReference type="ChEBI" id="CHEBI:30616"/>
        <dbReference type="ChEBI" id="CHEBI:33019"/>
        <dbReference type="ChEBI" id="CHEBI:57595"/>
        <dbReference type="ChEBI" id="CHEBI:78442"/>
        <dbReference type="ChEBI" id="CHEBI:78527"/>
        <dbReference type="ChEBI" id="CHEBI:456215"/>
        <dbReference type="EC" id="6.1.1.21"/>
    </reaction>
</comment>
<comment type="subunit">
    <text evidence="1">Homodimer.</text>
</comment>
<comment type="subcellular location">
    <subcellularLocation>
        <location evidence="1">Cytoplasm</location>
    </subcellularLocation>
</comment>
<comment type="similarity">
    <text evidence="1">Belongs to the class-II aminoacyl-tRNA synthetase family.</text>
</comment>
<keyword id="KW-0030">Aminoacyl-tRNA synthetase</keyword>
<keyword id="KW-0067">ATP-binding</keyword>
<keyword id="KW-0963">Cytoplasm</keyword>
<keyword id="KW-0436">Ligase</keyword>
<keyword id="KW-0547">Nucleotide-binding</keyword>
<keyword id="KW-0648">Protein biosynthesis</keyword>
<organism>
    <name type="scientific">Staphylococcus aureus (strain MSSA476)</name>
    <dbReference type="NCBI Taxonomy" id="282459"/>
    <lineage>
        <taxon>Bacteria</taxon>
        <taxon>Bacillati</taxon>
        <taxon>Bacillota</taxon>
        <taxon>Bacilli</taxon>
        <taxon>Bacillales</taxon>
        <taxon>Staphylococcaceae</taxon>
        <taxon>Staphylococcus</taxon>
    </lineage>
</organism>
<evidence type="ECO:0000255" key="1">
    <source>
        <dbReference type="HAMAP-Rule" id="MF_00127"/>
    </source>
</evidence>
<proteinExistence type="inferred from homology"/>
<protein>
    <recommendedName>
        <fullName evidence="1">Histidine--tRNA ligase</fullName>
        <ecNumber evidence="1">6.1.1.21</ecNumber>
    </recommendedName>
    <alternativeName>
        <fullName evidence="1">Histidyl-tRNA synthetase</fullName>
        <shortName evidence="1">HisRS</shortName>
    </alternativeName>
</protein>
<gene>
    <name evidence="1" type="primary">hisS</name>
    <name type="ordered locus">SAS1567</name>
</gene>
<feature type="chain" id="PRO_0000136252" description="Histidine--tRNA ligase">
    <location>
        <begin position="1"/>
        <end position="420"/>
    </location>
</feature>
<accession>Q6G8T8</accession>
<sequence>MIKIPRGTQDILPEDSKKWRYIENQLDELMTFYNYKEIRTPIFESTDLFARGVGDSTDVVQKEMYTFKDKGDRSITLRPEGTAAVVRSYIEHKMQGNPNQPIKLYYNGPMFRYERKQKGRYRQFNQFGVEAIGAENPSVDAEVLAMVMHIYQSFGLKHLKLVINSVGDMASRKEYNEALVKHFEPVIHEFCSDCQSRLHTNPMRILDCKVDRDKEAIKTAPRITDFLNEESKAYYEQVKAYLDDLGIPYIEDPNLVRGLDYYTHTAFELMMDNPNYDGAITTLCGGGRYNGLLELLDGPSETGIGFALSIERLLLALEEEGIELDIEENLDLFIVTMGDQADRYAVKLLNHLRHNGIKADKDYLQRKIKGQMKQADRLGAKFTIVIGDQELENNKIDVKNMTTGESETIELDALVEYFKK</sequence>
<reference key="1">
    <citation type="journal article" date="2004" name="Proc. Natl. Acad. Sci. U.S.A.">
        <title>Complete genomes of two clinical Staphylococcus aureus strains: evidence for the rapid evolution of virulence and drug resistance.</title>
        <authorList>
            <person name="Holden M.T.G."/>
            <person name="Feil E.J."/>
            <person name="Lindsay J.A."/>
            <person name="Peacock S.J."/>
            <person name="Day N.P.J."/>
            <person name="Enright M.C."/>
            <person name="Foster T.J."/>
            <person name="Moore C.E."/>
            <person name="Hurst L."/>
            <person name="Atkin R."/>
            <person name="Barron A."/>
            <person name="Bason N."/>
            <person name="Bentley S.D."/>
            <person name="Chillingworth C."/>
            <person name="Chillingworth T."/>
            <person name="Churcher C."/>
            <person name="Clark L."/>
            <person name="Corton C."/>
            <person name="Cronin A."/>
            <person name="Doggett J."/>
            <person name="Dowd L."/>
            <person name="Feltwell T."/>
            <person name="Hance Z."/>
            <person name="Harris B."/>
            <person name="Hauser H."/>
            <person name="Holroyd S."/>
            <person name="Jagels K."/>
            <person name="James K.D."/>
            <person name="Lennard N."/>
            <person name="Line A."/>
            <person name="Mayes R."/>
            <person name="Moule S."/>
            <person name="Mungall K."/>
            <person name="Ormond D."/>
            <person name="Quail M.A."/>
            <person name="Rabbinowitsch E."/>
            <person name="Rutherford K.M."/>
            <person name="Sanders M."/>
            <person name="Sharp S."/>
            <person name="Simmonds M."/>
            <person name="Stevens K."/>
            <person name="Whitehead S."/>
            <person name="Barrell B.G."/>
            <person name="Spratt B.G."/>
            <person name="Parkhill J."/>
        </authorList>
    </citation>
    <scope>NUCLEOTIDE SEQUENCE [LARGE SCALE GENOMIC DNA]</scope>
    <source>
        <strain>MSSA476</strain>
    </source>
</reference>
<name>SYH_STAAS</name>